<organism>
    <name type="scientific">Buchnera aphidicola subsp. Baizongia pistaciae (strain Bp)</name>
    <dbReference type="NCBI Taxonomy" id="224915"/>
    <lineage>
        <taxon>Bacteria</taxon>
        <taxon>Pseudomonadati</taxon>
        <taxon>Pseudomonadota</taxon>
        <taxon>Gammaproteobacteria</taxon>
        <taxon>Enterobacterales</taxon>
        <taxon>Erwiniaceae</taxon>
        <taxon>Buchnera</taxon>
    </lineage>
</organism>
<sequence>MLRGSIVALITPMNEYGHVCETSLEKLINYHINNGTKAIVSVGTTGESSTLSQEEHINVVMLTLEITNKRLPIIAGTGANATSEAILLTKKFENTGISACLTVTPYYNRPTQKGLYQHFKAISENTKIPQILYNVPIRTGCDLIPETIIKLSKFKNIIGIKEATGDLSRVQKIKNSVHKNFFIISGDDTTFLDFIQLGGHGVISVTANIAAKIMSNICHLALNKNFKLARFMNNKLIPLHQGLFHEPNPIPIKWLAKKIGLIASDTLRLPMTPVSNKTRLILEKALYFSKITAK</sequence>
<feature type="chain" id="PRO_0000103092" description="4-hydroxy-tetrahydrodipicolinate synthase">
    <location>
        <begin position="1"/>
        <end position="294"/>
    </location>
</feature>
<feature type="active site" description="Proton donor/acceptor" evidence="1">
    <location>
        <position position="133"/>
    </location>
</feature>
<feature type="active site" description="Schiff-base intermediate with substrate" evidence="1">
    <location>
        <position position="161"/>
    </location>
</feature>
<feature type="binding site" evidence="1">
    <location>
        <position position="45"/>
    </location>
    <ligand>
        <name>pyruvate</name>
        <dbReference type="ChEBI" id="CHEBI:15361"/>
    </ligand>
</feature>
<feature type="binding site" evidence="1">
    <location>
        <position position="203"/>
    </location>
    <ligand>
        <name>pyruvate</name>
        <dbReference type="ChEBI" id="CHEBI:15361"/>
    </ligand>
</feature>
<feature type="site" description="Part of a proton relay during catalysis" evidence="1">
    <location>
        <position position="44"/>
    </location>
</feature>
<feature type="site" description="Part of a proton relay during catalysis" evidence="1">
    <location>
        <position position="107"/>
    </location>
</feature>
<protein>
    <recommendedName>
        <fullName evidence="1">4-hydroxy-tetrahydrodipicolinate synthase</fullName>
        <shortName evidence="1">HTPA synthase</shortName>
        <ecNumber evidence="1">4.3.3.7</ecNumber>
    </recommendedName>
</protein>
<gene>
    <name evidence="1" type="primary">dapA</name>
    <name type="ordered locus">bbp_090</name>
</gene>
<comment type="function">
    <text evidence="1">Catalyzes the condensation of (S)-aspartate-beta-semialdehyde [(S)-ASA] and pyruvate to 4-hydroxy-tetrahydrodipicolinate (HTPA).</text>
</comment>
<comment type="catalytic activity">
    <reaction evidence="1">
        <text>L-aspartate 4-semialdehyde + pyruvate = (2S,4S)-4-hydroxy-2,3,4,5-tetrahydrodipicolinate + H2O + H(+)</text>
        <dbReference type="Rhea" id="RHEA:34171"/>
        <dbReference type="ChEBI" id="CHEBI:15361"/>
        <dbReference type="ChEBI" id="CHEBI:15377"/>
        <dbReference type="ChEBI" id="CHEBI:15378"/>
        <dbReference type="ChEBI" id="CHEBI:67139"/>
        <dbReference type="ChEBI" id="CHEBI:537519"/>
        <dbReference type="EC" id="4.3.3.7"/>
    </reaction>
</comment>
<comment type="pathway">
    <text evidence="1">Amino-acid biosynthesis; L-lysine biosynthesis via DAP pathway; (S)-tetrahydrodipicolinate from L-aspartate: step 3/4.</text>
</comment>
<comment type="subunit">
    <text evidence="1">Homotetramer; dimer of dimers.</text>
</comment>
<comment type="subcellular location">
    <subcellularLocation>
        <location evidence="1">Cytoplasm</location>
    </subcellularLocation>
</comment>
<comment type="similarity">
    <text evidence="1">Belongs to the DapA family.</text>
</comment>
<comment type="caution">
    <text evidence="2">Was originally thought to be a dihydrodipicolinate synthase (DHDPS), catalyzing the condensation of (S)-aspartate-beta-semialdehyde [(S)-ASA] and pyruvate to dihydrodipicolinate (DHDP). However, it was shown in E.coli that the product of the enzymatic reaction is not dihydrodipicolinate but in fact (4S)-4-hydroxy-2,3,4,5-tetrahydro-(2S)-dipicolinic acid (HTPA), and that the consecutive dehydration reaction leading to DHDP is not spontaneous but catalyzed by DapB.</text>
</comment>
<accession>Q89AY0</accession>
<proteinExistence type="inferred from homology"/>
<dbReference type="EC" id="4.3.3.7" evidence="1"/>
<dbReference type="EMBL" id="AE016826">
    <property type="protein sequence ID" value="AAO26825.1"/>
    <property type="molecule type" value="Genomic_DNA"/>
</dbReference>
<dbReference type="RefSeq" id="WP_011091226.1">
    <property type="nucleotide sequence ID" value="NC_004545.1"/>
</dbReference>
<dbReference type="SMR" id="Q89AY0"/>
<dbReference type="STRING" id="224915.bbp_090"/>
<dbReference type="KEGG" id="bab:bbp_090"/>
<dbReference type="eggNOG" id="COG0329">
    <property type="taxonomic scope" value="Bacteria"/>
</dbReference>
<dbReference type="HOGENOM" id="CLU_049343_7_1_6"/>
<dbReference type="OrthoDB" id="9782828at2"/>
<dbReference type="UniPathway" id="UPA00034">
    <property type="reaction ID" value="UER00017"/>
</dbReference>
<dbReference type="Proteomes" id="UP000000601">
    <property type="component" value="Chromosome"/>
</dbReference>
<dbReference type="GO" id="GO:0005829">
    <property type="term" value="C:cytosol"/>
    <property type="evidence" value="ECO:0007669"/>
    <property type="project" value="TreeGrafter"/>
</dbReference>
<dbReference type="GO" id="GO:0008840">
    <property type="term" value="F:4-hydroxy-tetrahydrodipicolinate synthase activity"/>
    <property type="evidence" value="ECO:0007669"/>
    <property type="project" value="UniProtKB-UniRule"/>
</dbReference>
<dbReference type="GO" id="GO:0019877">
    <property type="term" value="P:diaminopimelate biosynthetic process"/>
    <property type="evidence" value="ECO:0007669"/>
    <property type="project" value="UniProtKB-UniRule"/>
</dbReference>
<dbReference type="GO" id="GO:0009089">
    <property type="term" value="P:lysine biosynthetic process via diaminopimelate"/>
    <property type="evidence" value="ECO:0007669"/>
    <property type="project" value="UniProtKB-UniRule"/>
</dbReference>
<dbReference type="CDD" id="cd00950">
    <property type="entry name" value="DHDPS"/>
    <property type="match status" value="1"/>
</dbReference>
<dbReference type="Gene3D" id="3.20.20.70">
    <property type="entry name" value="Aldolase class I"/>
    <property type="match status" value="1"/>
</dbReference>
<dbReference type="HAMAP" id="MF_00418">
    <property type="entry name" value="DapA"/>
    <property type="match status" value="1"/>
</dbReference>
<dbReference type="InterPro" id="IPR013785">
    <property type="entry name" value="Aldolase_TIM"/>
</dbReference>
<dbReference type="InterPro" id="IPR005263">
    <property type="entry name" value="DapA"/>
</dbReference>
<dbReference type="InterPro" id="IPR002220">
    <property type="entry name" value="DapA-like"/>
</dbReference>
<dbReference type="InterPro" id="IPR020625">
    <property type="entry name" value="Schiff_base-form_aldolases_AS"/>
</dbReference>
<dbReference type="InterPro" id="IPR020624">
    <property type="entry name" value="Schiff_base-form_aldolases_CS"/>
</dbReference>
<dbReference type="NCBIfam" id="TIGR00674">
    <property type="entry name" value="dapA"/>
    <property type="match status" value="1"/>
</dbReference>
<dbReference type="PANTHER" id="PTHR12128:SF66">
    <property type="entry name" value="4-HYDROXY-2-OXOGLUTARATE ALDOLASE, MITOCHONDRIAL"/>
    <property type="match status" value="1"/>
</dbReference>
<dbReference type="PANTHER" id="PTHR12128">
    <property type="entry name" value="DIHYDRODIPICOLINATE SYNTHASE"/>
    <property type="match status" value="1"/>
</dbReference>
<dbReference type="Pfam" id="PF00701">
    <property type="entry name" value="DHDPS"/>
    <property type="match status" value="1"/>
</dbReference>
<dbReference type="PIRSF" id="PIRSF001365">
    <property type="entry name" value="DHDPS"/>
    <property type="match status" value="1"/>
</dbReference>
<dbReference type="PRINTS" id="PR00146">
    <property type="entry name" value="DHPICSNTHASE"/>
</dbReference>
<dbReference type="SMART" id="SM01130">
    <property type="entry name" value="DHDPS"/>
    <property type="match status" value="1"/>
</dbReference>
<dbReference type="SUPFAM" id="SSF51569">
    <property type="entry name" value="Aldolase"/>
    <property type="match status" value="1"/>
</dbReference>
<dbReference type="PROSITE" id="PS00665">
    <property type="entry name" value="DHDPS_1"/>
    <property type="match status" value="1"/>
</dbReference>
<dbReference type="PROSITE" id="PS00666">
    <property type="entry name" value="DHDPS_2"/>
    <property type="match status" value="1"/>
</dbReference>
<keyword id="KW-0028">Amino-acid biosynthesis</keyword>
<keyword id="KW-0963">Cytoplasm</keyword>
<keyword id="KW-0220">Diaminopimelate biosynthesis</keyword>
<keyword id="KW-0456">Lyase</keyword>
<keyword id="KW-0457">Lysine biosynthesis</keyword>
<keyword id="KW-1185">Reference proteome</keyword>
<keyword id="KW-0704">Schiff base</keyword>
<name>DAPA_BUCBP</name>
<evidence type="ECO:0000255" key="1">
    <source>
        <dbReference type="HAMAP-Rule" id="MF_00418"/>
    </source>
</evidence>
<evidence type="ECO:0000305" key="2"/>
<reference key="1">
    <citation type="journal article" date="2003" name="Proc. Natl. Acad. Sci. U.S.A.">
        <title>Reductive genome evolution in Buchnera aphidicola.</title>
        <authorList>
            <person name="van Ham R.C.H.J."/>
            <person name="Kamerbeek J."/>
            <person name="Palacios C."/>
            <person name="Rausell C."/>
            <person name="Abascal F."/>
            <person name="Bastolla U."/>
            <person name="Fernandez J.M."/>
            <person name="Jimenez L."/>
            <person name="Postigo M."/>
            <person name="Silva F.J."/>
            <person name="Tamames J."/>
            <person name="Viguera E."/>
            <person name="Latorre A."/>
            <person name="Valencia A."/>
            <person name="Moran F."/>
            <person name="Moya A."/>
        </authorList>
    </citation>
    <scope>NUCLEOTIDE SEQUENCE [LARGE SCALE GENOMIC DNA]</scope>
    <source>
        <strain>Bp</strain>
    </source>
</reference>